<accession>Q6FTB1</accession>
<protein>
    <recommendedName>
        <fullName evidence="7">Multidrug transporter TPO1_1</fullName>
    </recommendedName>
    <alternativeName>
        <fullName evidence="7">Clotrimazole exporter TPO1_1</fullName>
    </alternativeName>
    <alternativeName>
        <fullName evidence="8">Drug:H(+) antiporter TPO1_1</fullName>
        <shortName evidence="8">DHA TPO1_1</shortName>
    </alternativeName>
</protein>
<gene>
    <name evidence="7" type="primary">TPO1_1</name>
    <name type="ordered locus">CAGL0G03927g</name>
</gene>
<reference key="1">
    <citation type="journal article" date="2004" name="Nature">
        <title>Genome evolution in yeasts.</title>
        <authorList>
            <person name="Dujon B."/>
            <person name="Sherman D."/>
            <person name="Fischer G."/>
            <person name="Durrens P."/>
            <person name="Casaregola S."/>
            <person name="Lafontaine I."/>
            <person name="de Montigny J."/>
            <person name="Marck C."/>
            <person name="Neuveglise C."/>
            <person name="Talla E."/>
            <person name="Goffard N."/>
            <person name="Frangeul L."/>
            <person name="Aigle M."/>
            <person name="Anthouard V."/>
            <person name="Babour A."/>
            <person name="Barbe V."/>
            <person name="Barnay S."/>
            <person name="Blanchin S."/>
            <person name="Beckerich J.-M."/>
            <person name="Beyne E."/>
            <person name="Bleykasten C."/>
            <person name="Boisrame A."/>
            <person name="Boyer J."/>
            <person name="Cattolico L."/>
            <person name="Confanioleri F."/>
            <person name="de Daruvar A."/>
            <person name="Despons L."/>
            <person name="Fabre E."/>
            <person name="Fairhead C."/>
            <person name="Ferry-Dumazet H."/>
            <person name="Groppi A."/>
            <person name="Hantraye F."/>
            <person name="Hennequin C."/>
            <person name="Jauniaux N."/>
            <person name="Joyet P."/>
            <person name="Kachouri R."/>
            <person name="Kerrest A."/>
            <person name="Koszul R."/>
            <person name="Lemaire M."/>
            <person name="Lesur I."/>
            <person name="Ma L."/>
            <person name="Muller H."/>
            <person name="Nicaud J.-M."/>
            <person name="Nikolski M."/>
            <person name="Oztas S."/>
            <person name="Ozier-Kalogeropoulos O."/>
            <person name="Pellenz S."/>
            <person name="Potier S."/>
            <person name="Richard G.-F."/>
            <person name="Straub M.-L."/>
            <person name="Suleau A."/>
            <person name="Swennen D."/>
            <person name="Tekaia F."/>
            <person name="Wesolowski-Louvel M."/>
            <person name="Westhof E."/>
            <person name="Wirth B."/>
            <person name="Zeniou-Meyer M."/>
            <person name="Zivanovic Y."/>
            <person name="Bolotin-Fukuhara M."/>
            <person name="Thierry A."/>
            <person name="Bouchier C."/>
            <person name="Caudron B."/>
            <person name="Scarpelli C."/>
            <person name="Gaillardin C."/>
            <person name="Weissenbach J."/>
            <person name="Wincker P."/>
            <person name="Souciet J.-L."/>
        </authorList>
    </citation>
    <scope>NUCLEOTIDE SEQUENCE [LARGE SCALE GENOMIC DNA]</scope>
    <source>
        <strain>ATCC 2001 / BCRC 20586 / JCM 3761 / NBRC 0622 / NRRL Y-65 / CBS 138</strain>
    </source>
</reference>
<reference key="2">
    <citation type="journal article" date="2016" name="Mol. Cell. Proteomics">
        <title>Membrane proteome-wide response to the antifungal drug clotrimazole in Candida glabrata: role of the transcription factor CgPdr1 and the drug:H+ antiporters CgTpo1_1 and CgTpo1_2.</title>
        <authorList>
            <person name="Pais P."/>
            <person name="Costa C."/>
            <person name="Pires C."/>
            <person name="Shimizu K."/>
            <person name="Chibana H."/>
            <person name="Teixeira M.C."/>
        </authorList>
    </citation>
    <scope>DISRUPTION PHENOTYPE</scope>
    <scope>FUNCTION</scope>
    <scope>SUBCELLULAR LOCATION</scope>
    <scope>INDUCTION</scope>
</reference>
<reference key="3">
    <citation type="journal article" date="2016" name="Front. Microbiol.">
        <title>Clotrimazole drug resistance in Candida glabrata clinical isolates correlates with increased expression of the drug:H(+) antiporters CgAqr1, CgTpo1_1, CgTpo3, and CgQdr2.</title>
        <authorList>
            <person name="Costa C."/>
            <person name="Ribeiro J."/>
            <person name="Miranda I.M."/>
            <person name="Silva-Dias A."/>
            <person name="Cavalheiro M."/>
            <person name="Costa-de-Oliveira S."/>
            <person name="Rodrigues A.G."/>
            <person name="Teixeira M.C."/>
        </authorList>
    </citation>
    <scope>FUNCTION</scope>
</reference>
<reference key="4">
    <citation type="journal article" date="2017" name="Cell. Microbiol.">
        <title>The multidrug resistance transporters CgTpo1_1 and CgTpo1_2 play a role in virulence and biofilm formation in the human pathogen Candida glabrata.</title>
        <authorList>
            <person name="Santos R."/>
            <person name="Costa C."/>
            <person name="Mil-Homens D."/>
            <person name="Romao D."/>
            <person name="de Carvalho C.C."/>
            <person name="Pais P."/>
            <person name="Mira N.P."/>
            <person name="Fialho A.M."/>
            <person name="Teixeira M.C."/>
        </authorList>
    </citation>
    <scope>DISRUPTION PHENOTYPE</scope>
    <scope>FUNCTION</scope>
</reference>
<comment type="function">
    <text evidence="4 5 6">Multidrug resistance transporter involved in resistance to azole antifungal drugs such as the imidazoles miconazole, ketoconazole, and tioconazole; as well as the triazoles itraconazole and fluconazole (PubMed:26512119). Also plays a role in the resistance to other antifungal drug families such as the polyene amphotericin B, the pyrimide analog flucytosine, the fungicide mancozeb, and the polyamine spermine (PubMed:26512119). Decreases the intracellular accumulation of clotrimazole by mediating its extrusion from cells (PubMed:26512119, PubMed:27148215). Involved in virulence by conferring resistance to the human antimicrobial peptide histatin-5 (PubMed:27780306).</text>
</comment>
<comment type="subcellular location">
    <subcellularLocation>
        <location evidence="4">Cell membrane</location>
        <topology evidence="1">Multi-pass membrane protein</topology>
    </subcellularLocation>
</comment>
<comment type="induction">
    <text evidence="4">Expression is up-regulated by clotrimazole (PubMed:26512119).</text>
</comment>
<comment type="disruption phenotype">
    <text evidence="4 6">Leads to intracellular accumulation of clotrimazole and increases the susceptibility to clotrimazole but also to other imidazoles such as miconazole, ketoconazole, and tioconazole; as well as triazoles such as itraconazole and fluconazole (PubMed:26512119). Also increases susceptibility to other antifungal drug families such as the polyene amphotericin B, the pyrimide analog flucytosine, the fungicide mancozeb, and the polyamine spermine (PubMed:26512119). Decreases virulence in a Galleria mellonella model of infection (PubMed:27780306).</text>
</comment>
<comment type="similarity">
    <text evidence="9">Belongs to the major facilitator superfamily. DHA1 family. Polyamines/proton antiporter (TC 2.A.1.2.16) subfamily.</text>
</comment>
<dbReference type="EMBL" id="CR380953">
    <property type="protein sequence ID" value="CAG59460.1"/>
    <property type="molecule type" value="Genomic_DNA"/>
</dbReference>
<dbReference type="RefSeq" id="XP_446533.1">
    <property type="nucleotide sequence ID" value="XM_446533.1"/>
</dbReference>
<dbReference type="FunCoup" id="Q6FTB1">
    <property type="interactions" value="118"/>
</dbReference>
<dbReference type="STRING" id="284593.Q6FTB1"/>
<dbReference type="GlyCosmos" id="Q6FTB1">
    <property type="glycosylation" value="1 site, No reported glycans"/>
</dbReference>
<dbReference type="EnsemblFungi" id="CAGL0G03927g-T">
    <property type="protein sequence ID" value="CAGL0G03927g-T-p1"/>
    <property type="gene ID" value="CAGL0G03927g"/>
</dbReference>
<dbReference type="GeneID" id="2888403"/>
<dbReference type="KEGG" id="cgr:2888403"/>
<dbReference type="CGD" id="CAL0137711">
    <property type="gene designation" value="TPO1_1"/>
</dbReference>
<dbReference type="VEuPathDB" id="FungiDB:B1J91_G03927g"/>
<dbReference type="VEuPathDB" id="FungiDB:CAGL0G03927g"/>
<dbReference type="eggNOG" id="KOG0255">
    <property type="taxonomic scope" value="Eukaryota"/>
</dbReference>
<dbReference type="HOGENOM" id="CLU_008455_11_4_1"/>
<dbReference type="InParanoid" id="Q6FTB1"/>
<dbReference type="PHI-base" id="PHI:6625"/>
<dbReference type="Proteomes" id="UP000002428">
    <property type="component" value="Chromosome G"/>
</dbReference>
<dbReference type="GO" id="GO:0033101">
    <property type="term" value="C:cellular bud membrane"/>
    <property type="evidence" value="ECO:0007669"/>
    <property type="project" value="EnsemblFungi"/>
</dbReference>
<dbReference type="GO" id="GO:0000329">
    <property type="term" value="C:fungal-type vacuole membrane"/>
    <property type="evidence" value="ECO:0007669"/>
    <property type="project" value="EnsemblFungi"/>
</dbReference>
<dbReference type="GO" id="GO:0005886">
    <property type="term" value="C:plasma membrane"/>
    <property type="evidence" value="ECO:0000314"/>
    <property type="project" value="CGD"/>
</dbReference>
<dbReference type="GO" id="GO:0015606">
    <property type="term" value="F:spermidine transmembrane transporter activity"/>
    <property type="evidence" value="ECO:0007669"/>
    <property type="project" value="EnsemblFungi"/>
</dbReference>
<dbReference type="GO" id="GO:0000297">
    <property type="term" value="F:spermine transmembrane transporter activity"/>
    <property type="evidence" value="ECO:0007669"/>
    <property type="project" value="EnsemblFungi"/>
</dbReference>
<dbReference type="GO" id="GO:0034599">
    <property type="term" value="P:cellular response to oxidative stress"/>
    <property type="evidence" value="ECO:0007669"/>
    <property type="project" value="EnsemblFungi"/>
</dbReference>
<dbReference type="GO" id="GO:0015847">
    <property type="term" value="P:putrescine transport"/>
    <property type="evidence" value="ECO:0007669"/>
    <property type="project" value="EnsemblFungi"/>
</dbReference>
<dbReference type="CDD" id="cd17323">
    <property type="entry name" value="MFS_Tpo1_MDR_like"/>
    <property type="match status" value="1"/>
</dbReference>
<dbReference type="FunFam" id="1.20.1250.20:FF:000011">
    <property type="entry name" value="MFS multidrug transporter, putative"/>
    <property type="match status" value="1"/>
</dbReference>
<dbReference type="Gene3D" id="1.20.1250.20">
    <property type="entry name" value="MFS general substrate transporter like domains"/>
    <property type="match status" value="1"/>
</dbReference>
<dbReference type="InterPro" id="IPR011701">
    <property type="entry name" value="MFS"/>
</dbReference>
<dbReference type="InterPro" id="IPR020846">
    <property type="entry name" value="MFS_dom"/>
</dbReference>
<dbReference type="InterPro" id="IPR036259">
    <property type="entry name" value="MFS_trans_sf"/>
</dbReference>
<dbReference type="PANTHER" id="PTHR23502">
    <property type="entry name" value="MAJOR FACILITATOR SUPERFAMILY"/>
    <property type="match status" value="1"/>
</dbReference>
<dbReference type="PANTHER" id="PTHR23502:SF31">
    <property type="entry name" value="POLYAMINE TRANSPORTER 1"/>
    <property type="match status" value="1"/>
</dbReference>
<dbReference type="Pfam" id="PF07690">
    <property type="entry name" value="MFS_1"/>
    <property type="match status" value="1"/>
</dbReference>
<dbReference type="SUPFAM" id="SSF103473">
    <property type="entry name" value="MFS general substrate transporter"/>
    <property type="match status" value="1"/>
</dbReference>
<dbReference type="PROSITE" id="PS50850">
    <property type="entry name" value="MFS"/>
    <property type="match status" value="1"/>
</dbReference>
<name>TPO11_CANGA</name>
<evidence type="ECO:0000255" key="1"/>
<evidence type="ECO:0000255" key="2">
    <source>
        <dbReference type="PROSITE-ProRule" id="PRU00498"/>
    </source>
</evidence>
<evidence type="ECO:0000256" key="3">
    <source>
        <dbReference type="SAM" id="MobiDB-lite"/>
    </source>
</evidence>
<evidence type="ECO:0000269" key="4">
    <source>
    </source>
</evidence>
<evidence type="ECO:0000269" key="5">
    <source>
    </source>
</evidence>
<evidence type="ECO:0000269" key="6">
    <source>
    </source>
</evidence>
<evidence type="ECO:0000303" key="7">
    <source>
    </source>
</evidence>
<evidence type="ECO:0000303" key="8">
    <source>
    </source>
</evidence>
<evidence type="ECO:0000305" key="9"/>
<proteinExistence type="evidence at transcript level"/>
<feature type="chain" id="PRO_0000443414" description="Multidrug transporter TPO1_1">
    <location>
        <begin position="1"/>
        <end position="567"/>
    </location>
</feature>
<feature type="transmembrane region" description="Helical" evidence="1">
    <location>
        <begin position="128"/>
        <end position="148"/>
    </location>
</feature>
<feature type="transmembrane region" description="Helical" evidence="1">
    <location>
        <begin position="157"/>
        <end position="177"/>
    </location>
</feature>
<feature type="transmembrane region" description="Helical" evidence="1">
    <location>
        <begin position="194"/>
        <end position="214"/>
    </location>
</feature>
<feature type="transmembrane region" description="Helical" evidence="1">
    <location>
        <begin position="224"/>
        <end position="244"/>
    </location>
</feature>
<feature type="transmembrane region" description="Helical" evidence="1">
    <location>
        <begin position="253"/>
        <end position="273"/>
    </location>
</feature>
<feature type="transmembrane region" description="Helical" evidence="1">
    <location>
        <begin position="283"/>
        <end position="303"/>
    </location>
</feature>
<feature type="transmembrane region" description="Helical" evidence="1">
    <location>
        <begin position="358"/>
        <end position="378"/>
    </location>
</feature>
<feature type="transmembrane region" description="Helical" evidence="1">
    <location>
        <begin position="396"/>
        <end position="416"/>
    </location>
</feature>
<feature type="transmembrane region" description="Helical" evidence="1">
    <location>
        <begin position="436"/>
        <end position="456"/>
    </location>
</feature>
<feature type="transmembrane region" description="Helical" evidence="1">
    <location>
        <begin position="471"/>
        <end position="491"/>
    </location>
</feature>
<feature type="transmembrane region" description="Helical" evidence="1">
    <location>
        <begin position="498"/>
        <end position="520"/>
    </location>
</feature>
<feature type="transmembrane region" description="Helical" evidence="1">
    <location>
        <begin position="531"/>
        <end position="551"/>
    </location>
</feature>
<feature type="region of interest" description="Disordered" evidence="3">
    <location>
        <begin position="1"/>
        <end position="71"/>
    </location>
</feature>
<feature type="glycosylation site" description="N-linked (GlcNAc...) asparagine" evidence="2">
    <location>
        <position position="120"/>
    </location>
</feature>
<keyword id="KW-1003">Cell membrane</keyword>
<keyword id="KW-0325">Glycoprotein</keyword>
<keyword id="KW-0472">Membrane</keyword>
<keyword id="KW-1185">Reference proteome</keyword>
<keyword id="KW-0812">Transmembrane</keyword>
<keyword id="KW-1133">Transmembrane helix</keyword>
<keyword id="KW-0813">Transport</keyword>
<keyword id="KW-0843">Virulence</keyword>
<sequence length="567" mass="62560">MVEEISPKYTNEQAEASSSSSSSVSGEPKDFSGSLENQEDLGELIERTNTMTSGAESKVETNRRMSRILTGTQDDPEKIAIDYSNCPPMGGDRPFPPALPEQSQFEVTFDGPNDPIHPFNWSMKTKTIICIVLCLNCICISMGSSIFASGVPQICKIYHVIPVVAILGVTLYVFGFAASPVIYAPLSEVYGRRGVLVISAFGFAVFQFAVATSKDLQSIMICRFFGGLIGAAPMAVVPAAFADMFDVRVRGKAICLFSLGVFVGPILSPVMGSYIAQRTTWRWLEYVTGCFASALFVAVALTFKETHHPTILVQKAKEMRKSTNNWGIHAAHEHVELSVSEIAKKTITRPIKMLFTEPLLLIITIYNSFVYGILYLMLEAYPIVFVEGYGFEANGELPYIALIIGMLVCTAFLWYFENDYLKRIQKAGKLVPEARLIPMVYAGVIFPIGILWFCWTGYYPHKIHWMCPTVAGSFIGFGLMGIFLPCLNYIIESYLPLAASAVAANTFMRSAFGAVFPLFAGYMFHGMGTGWAGLLLGLFAAALIPVPLFFLKYGERIRKNSKDAYYA</sequence>
<organism>
    <name type="scientific">Candida glabrata (strain ATCC 2001 / BCRC 20586 / JCM 3761 / NBRC 0622 / NRRL Y-65 / CBS 138)</name>
    <name type="common">Yeast</name>
    <name type="synonym">Nakaseomyces glabratus</name>
    <dbReference type="NCBI Taxonomy" id="284593"/>
    <lineage>
        <taxon>Eukaryota</taxon>
        <taxon>Fungi</taxon>
        <taxon>Dikarya</taxon>
        <taxon>Ascomycota</taxon>
        <taxon>Saccharomycotina</taxon>
        <taxon>Saccharomycetes</taxon>
        <taxon>Saccharomycetales</taxon>
        <taxon>Saccharomycetaceae</taxon>
        <taxon>Nakaseomyces</taxon>
    </lineage>
</organism>